<evidence type="ECO:0000255" key="1">
    <source>
        <dbReference type="HAMAP-Rule" id="MF_01337"/>
    </source>
</evidence>
<evidence type="ECO:0000305" key="2"/>
<dbReference type="EMBL" id="CP000453">
    <property type="protein sequence ID" value="ABI55828.1"/>
    <property type="molecule type" value="Genomic_DNA"/>
</dbReference>
<dbReference type="RefSeq" id="WP_011628223.1">
    <property type="nucleotide sequence ID" value="NC_008340.1"/>
</dbReference>
<dbReference type="SMR" id="Q0ABF9"/>
<dbReference type="KEGG" id="aeh:Mlg_0474"/>
<dbReference type="eggNOG" id="COG0256">
    <property type="taxonomic scope" value="Bacteria"/>
</dbReference>
<dbReference type="HOGENOM" id="CLU_098841_0_1_6"/>
<dbReference type="OrthoDB" id="9810939at2"/>
<dbReference type="Proteomes" id="UP000001962">
    <property type="component" value="Chromosome"/>
</dbReference>
<dbReference type="GO" id="GO:0022625">
    <property type="term" value="C:cytosolic large ribosomal subunit"/>
    <property type="evidence" value="ECO:0007669"/>
    <property type="project" value="TreeGrafter"/>
</dbReference>
<dbReference type="GO" id="GO:0008097">
    <property type="term" value="F:5S rRNA binding"/>
    <property type="evidence" value="ECO:0007669"/>
    <property type="project" value="TreeGrafter"/>
</dbReference>
<dbReference type="GO" id="GO:0003735">
    <property type="term" value="F:structural constituent of ribosome"/>
    <property type="evidence" value="ECO:0007669"/>
    <property type="project" value="InterPro"/>
</dbReference>
<dbReference type="GO" id="GO:0006412">
    <property type="term" value="P:translation"/>
    <property type="evidence" value="ECO:0007669"/>
    <property type="project" value="UniProtKB-UniRule"/>
</dbReference>
<dbReference type="CDD" id="cd00432">
    <property type="entry name" value="Ribosomal_L18_L5e"/>
    <property type="match status" value="1"/>
</dbReference>
<dbReference type="FunFam" id="3.30.420.100:FF:000001">
    <property type="entry name" value="50S ribosomal protein L18"/>
    <property type="match status" value="1"/>
</dbReference>
<dbReference type="Gene3D" id="3.30.420.100">
    <property type="match status" value="1"/>
</dbReference>
<dbReference type="HAMAP" id="MF_01337_B">
    <property type="entry name" value="Ribosomal_uL18_B"/>
    <property type="match status" value="1"/>
</dbReference>
<dbReference type="InterPro" id="IPR004389">
    <property type="entry name" value="Ribosomal_uL18_bac-type"/>
</dbReference>
<dbReference type="InterPro" id="IPR005484">
    <property type="entry name" value="Ribosomal_uL18_bac/euk"/>
</dbReference>
<dbReference type="NCBIfam" id="TIGR00060">
    <property type="entry name" value="L18_bact"/>
    <property type="match status" value="1"/>
</dbReference>
<dbReference type="PANTHER" id="PTHR12899">
    <property type="entry name" value="39S RIBOSOMAL PROTEIN L18, MITOCHONDRIAL"/>
    <property type="match status" value="1"/>
</dbReference>
<dbReference type="PANTHER" id="PTHR12899:SF3">
    <property type="entry name" value="LARGE RIBOSOMAL SUBUNIT PROTEIN UL18M"/>
    <property type="match status" value="1"/>
</dbReference>
<dbReference type="Pfam" id="PF00861">
    <property type="entry name" value="Ribosomal_L18p"/>
    <property type="match status" value="1"/>
</dbReference>
<dbReference type="SUPFAM" id="SSF53137">
    <property type="entry name" value="Translational machinery components"/>
    <property type="match status" value="1"/>
</dbReference>
<sequence>MDKKATRLRRARRARAKIAELKVHRLSVHRTPRHMYAQIIAPDGGRTLVAASTVEKDLRSRAEGTGNCSAAAEVGRLIAERAKAAGVERVAFDRSGFKYHGRVKTLADAAREAGLQF</sequence>
<comment type="function">
    <text evidence="1">This is one of the proteins that bind and probably mediate the attachment of the 5S RNA into the large ribosomal subunit, where it forms part of the central protuberance.</text>
</comment>
<comment type="subunit">
    <text evidence="1">Part of the 50S ribosomal subunit; part of the 5S rRNA/L5/L18/L25 subcomplex. Contacts the 5S and 23S rRNAs.</text>
</comment>
<comment type="similarity">
    <text evidence="1">Belongs to the universal ribosomal protein uL18 family.</text>
</comment>
<protein>
    <recommendedName>
        <fullName evidence="1">Large ribosomal subunit protein uL18</fullName>
    </recommendedName>
    <alternativeName>
        <fullName evidence="2">50S ribosomal protein L18</fullName>
    </alternativeName>
</protein>
<organism>
    <name type="scientific">Alkalilimnicola ehrlichii (strain ATCC BAA-1101 / DSM 17681 / MLHE-1)</name>
    <dbReference type="NCBI Taxonomy" id="187272"/>
    <lineage>
        <taxon>Bacteria</taxon>
        <taxon>Pseudomonadati</taxon>
        <taxon>Pseudomonadota</taxon>
        <taxon>Gammaproteobacteria</taxon>
        <taxon>Chromatiales</taxon>
        <taxon>Ectothiorhodospiraceae</taxon>
        <taxon>Alkalilimnicola</taxon>
    </lineage>
</organism>
<reference key="1">
    <citation type="submission" date="2006-08" db="EMBL/GenBank/DDBJ databases">
        <title>Complete sequence of Alkalilimnicola ehrilichei MLHE-1.</title>
        <authorList>
            <person name="Copeland A."/>
            <person name="Lucas S."/>
            <person name="Lapidus A."/>
            <person name="Barry K."/>
            <person name="Detter J.C."/>
            <person name="Glavina del Rio T."/>
            <person name="Hammon N."/>
            <person name="Israni S."/>
            <person name="Dalin E."/>
            <person name="Tice H."/>
            <person name="Pitluck S."/>
            <person name="Sims D."/>
            <person name="Brettin T."/>
            <person name="Bruce D."/>
            <person name="Han C."/>
            <person name="Tapia R."/>
            <person name="Gilna P."/>
            <person name="Schmutz J."/>
            <person name="Larimer F."/>
            <person name="Land M."/>
            <person name="Hauser L."/>
            <person name="Kyrpides N."/>
            <person name="Mikhailova N."/>
            <person name="Oremland R.S."/>
            <person name="Hoeft S.E."/>
            <person name="Switzer-Blum J."/>
            <person name="Kulp T."/>
            <person name="King G."/>
            <person name="Tabita R."/>
            <person name="Witte B."/>
            <person name="Santini J.M."/>
            <person name="Basu P."/>
            <person name="Hollibaugh J.T."/>
            <person name="Xie G."/>
            <person name="Stolz J.F."/>
            <person name="Richardson P."/>
        </authorList>
    </citation>
    <scope>NUCLEOTIDE SEQUENCE [LARGE SCALE GENOMIC DNA]</scope>
    <source>
        <strain>ATCC BAA-1101 / DSM 17681 / MLHE-1</strain>
    </source>
</reference>
<name>RL18_ALKEH</name>
<gene>
    <name evidence="1" type="primary">rplR</name>
    <name type="ordered locus">Mlg_0474</name>
</gene>
<proteinExistence type="inferred from homology"/>
<accession>Q0ABF9</accession>
<feature type="chain" id="PRO_1000052984" description="Large ribosomal subunit protein uL18">
    <location>
        <begin position="1"/>
        <end position="117"/>
    </location>
</feature>
<keyword id="KW-1185">Reference proteome</keyword>
<keyword id="KW-0687">Ribonucleoprotein</keyword>
<keyword id="KW-0689">Ribosomal protein</keyword>
<keyword id="KW-0694">RNA-binding</keyword>
<keyword id="KW-0699">rRNA-binding</keyword>